<sequence>MTKIIFMGTPDFSTTVLEMLIAEHDVIAVVTQPDRPVGRKRVMTPPPVKKVAMKYDLPVYQPEKLSGSEELEQLLQLDVDLIVTAAFGQLLPESLLALPKLGAINVHASLLPKYRGGAPIHQAIIDGEQETGITIMYMVKKLDAGNIISQQAIKIEENDNVGTMHDKLSVLGADLLKETLPSIIEGTNESVPQDDTQATFASNIRREDERISWNKPGRQVFNQIRGLSPWPVAYTTMDDTNLKIYDAELVETNKINEPGTIIETTKKAIIVATNDNEAVAIKDMQLAGKKRMLAANYLSGAQNTLVGKKLI</sequence>
<comment type="function">
    <text evidence="1">Attaches a formyl group to the free amino group of methionyl-tRNA(fMet). The formyl group appears to play a dual role in the initiator identity of N-formylmethionyl-tRNA by promoting its recognition by IF2 and preventing the misappropriation of this tRNA by the elongation apparatus.</text>
</comment>
<comment type="catalytic activity">
    <reaction evidence="1">
        <text>L-methionyl-tRNA(fMet) + (6R)-10-formyltetrahydrofolate = N-formyl-L-methionyl-tRNA(fMet) + (6S)-5,6,7,8-tetrahydrofolate + H(+)</text>
        <dbReference type="Rhea" id="RHEA:24380"/>
        <dbReference type="Rhea" id="RHEA-COMP:9952"/>
        <dbReference type="Rhea" id="RHEA-COMP:9953"/>
        <dbReference type="ChEBI" id="CHEBI:15378"/>
        <dbReference type="ChEBI" id="CHEBI:57453"/>
        <dbReference type="ChEBI" id="CHEBI:78530"/>
        <dbReference type="ChEBI" id="CHEBI:78844"/>
        <dbReference type="ChEBI" id="CHEBI:195366"/>
        <dbReference type="EC" id="2.1.2.9"/>
    </reaction>
</comment>
<comment type="similarity">
    <text evidence="1">Belongs to the Fmt family.</text>
</comment>
<protein>
    <recommendedName>
        <fullName evidence="1">Methionyl-tRNA formyltransferase</fullName>
        <ecNumber evidence="1">2.1.2.9</ecNumber>
    </recommendedName>
</protein>
<dbReference type="EC" id="2.1.2.9" evidence="1"/>
<dbReference type="EMBL" id="BA000018">
    <property type="protein sequence ID" value="BAB42311.1"/>
    <property type="molecule type" value="Genomic_DNA"/>
</dbReference>
<dbReference type="PIR" id="C89894">
    <property type="entry name" value="C89894"/>
</dbReference>
<dbReference type="RefSeq" id="WP_000161291.1">
    <property type="nucleotide sequence ID" value="NC_002745.2"/>
</dbReference>
<dbReference type="SMR" id="P99127"/>
<dbReference type="EnsemblBacteria" id="BAB42311">
    <property type="protein sequence ID" value="BAB42311"/>
    <property type="gene ID" value="BAB42311"/>
</dbReference>
<dbReference type="KEGG" id="sau:SA1059"/>
<dbReference type="HOGENOM" id="CLU_033347_1_1_9"/>
<dbReference type="GO" id="GO:0005829">
    <property type="term" value="C:cytosol"/>
    <property type="evidence" value="ECO:0007669"/>
    <property type="project" value="TreeGrafter"/>
</dbReference>
<dbReference type="GO" id="GO:0004479">
    <property type="term" value="F:methionyl-tRNA formyltransferase activity"/>
    <property type="evidence" value="ECO:0007669"/>
    <property type="project" value="UniProtKB-UniRule"/>
</dbReference>
<dbReference type="CDD" id="cd08646">
    <property type="entry name" value="FMT_core_Met-tRNA-FMT_N"/>
    <property type="match status" value="1"/>
</dbReference>
<dbReference type="CDD" id="cd08704">
    <property type="entry name" value="Met_tRNA_FMT_C"/>
    <property type="match status" value="1"/>
</dbReference>
<dbReference type="FunFam" id="3.40.50.12230:FF:000001">
    <property type="entry name" value="Methionyl-tRNA formyltransferase"/>
    <property type="match status" value="1"/>
</dbReference>
<dbReference type="FunFam" id="3.40.50.170:FF:000004">
    <property type="entry name" value="Methionyl-tRNA formyltransferase"/>
    <property type="match status" value="1"/>
</dbReference>
<dbReference type="Gene3D" id="3.10.25.10">
    <property type="entry name" value="Formyl transferase, C-terminal domain"/>
    <property type="match status" value="1"/>
</dbReference>
<dbReference type="Gene3D" id="3.40.50.170">
    <property type="entry name" value="Formyl transferase, N-terminal domain"/>
    <property type="match status" value="1"/>
</dbReference>
<dbReference type="HAMAP" id="MF_00182">
    <property type="entry name" value="Formyl_trans"/>
    <property type="match status" value="1"/>
</dbReference>
<dbReference type="InterPro" id="IPR005794">
    <property type="entry name" value="Fmt"/>
</dbReference>
<dbReference type="InterPro" id="IPR005793">
    <property type="entry name" value="Formyl_trans_C"/>
</dbReference>
<dbReference type="InterPro" id="IPR037022">
    <property type="entry name" value="Formyl_trans_C_sf"/>
</dbReference>
<dbReference type="InterPro" id="IPR002376">
    <property type="entry name" value="Formyl_transf_N"/>
</dbReference>
<dbReference type="InterPro" id="IPR036477">
    <property type="entry name" value="Formyl_transf_N_sf"/>
</dbReference>
<dbReference type="InterPro" id="IPR011034">
    <property type="entry name" value="Formyl_transferase-like_C_sf"/>
</dbReference>
<dbReference type="InterPro" id="IPR001555">
    <property type="entry name" value="GART_AS"/>
</dbReference>
<dbReference type="InterPro" id="IPR044135">
    <property type="entry name" value="Met-tRNA-FMT_C"/>
</dbReference>
<dbReference type="InterPro" id="IPR041711">
    <property type="entry name" value="Met-tRNA-FMT_N"/>
</dbReference>
<dbReference type="NCBIfam" id="TIGR00460">
    <property type="entry name" value="fmt"/>
    <property type="match status" value="1"/>
</dbReference>
<dbReference type="PANTHER" id="PTHR11138">
    <property type="entry name" value="METHIONYL-TRNA FORMYLTRANSFERASE"/>
    <property type="match status" value="1"/>
</dbReference>
<dbReference type="PANTHER" id="PTHR11138:SF5">
    <property type="entry name" value="METHIONYL-TRNA FORMYLTRANSFERASE, MITOCHONDRIAL"/>
    <property type="match status" value="1"/>
</dbReference>
<dbReference type="Pfam" id="PF02911">
    <property type="entry name" value="Formyl_trans_C"/>
    <property type="match status" value="1"/>
</dbReference>
<dbReference type="Pfam" id="PF00551">
    <property type="entry name" value="Formyl_trans_N"/>
    <property type="match status" value="1"/>
</dbReference>
<dbReference type="SUPFAM" id="SSF50486">
    <property type="entry name" value="FMT C-terminal domain-like"/>
    <property type="match status" value="1"/>
</dbReference>
<dbReference type="SUPFAM" id="SSF53328">
    <property type="entry name" value="Formyltransferase"/>
    <property type="match status" value="1"/>
</dbReference>
<dbReference type="PROSITE" id="PS00373">
    <property type="entry name" value="GART"/>
    <property type="match status" value="1"/>
</dbReference>
<reference key="1">
    <citation type="journal article" date="2001" name="Lancet">
        <title>Whole genome sequencing of meticillin-resistant Staphylococcus aureus.</title>
        <authorList>
            <person name="Kuroda M."/>
            <person name="Ohta T."/>
            <person name="Uchiyama I."/>
            <person name="Baba T."/>
            <person name="Yuzawa H."/>
            <person name="Kobayashi I."/>
            <person name="Cui L."/>
            <person name="Oguchi A."/>
            <person name="Aoki K."/>
            <person name="Nagai Y."/>
            <person name="Lian J.-Q."/>
            <person name="Ito T."/>
            <person name="Kanamori M."/>
            <person name="Matsumaru H."/>
            <person name="Maruyama A."/>
            <person name="Murakami H."/>
            <person name="Hosoyama A."/>
            <person name="Mizutani-Ui Y."/>
            <person name="Takahashi N.K."/>
            <person name="Sawano T."/>
            <person name="Inoue R."/>
            <person name="Kaito C."/>
            <person name="Sekimizu K."/>
            <person name="Hirakawa H."/>
            <person name="Kuhara S."/>
            <person name="Goto S."/>
            <person name="Yabuzaki J."/>
            <person name="Kanehisa M."/>
            <person name="Yamashita A."/>
            <person name="Oshima K."/>
            <person name="Furuya K."/>
            <person name="Yoshino C."/>
            <person name="Shiba T."/>
            <person name="Hattori M."/>
            <person name="Ogasawara N."/>
            <person name="Hayashi H."/>
            <person name="Hiramatsu K."/>
        </authorList>
    </citation>
    <scope>NUCLEOTIDE SEQUENCE [LARGE SCALE GENOMIC DNA]</scope>
    <source>
        <strain>N315</strain>
    </source>
</reference>
<reference key="2">
    <citation type="journal article" date="2005" name="J. Microbiol. Methods">
        <title>Correlation of proteomic and transcriptomic profiles of Staphylococcus aureus during the post-exponential phase of growth.</title>
        <authorList>
            <person name="Scherl A."/>
            <person name="Francois P."/>
            <person name="Bento M."/>
            <person name="Deshusses J.M."/>
            <person name="Charbonnier Y."/>
            <person name="Converset V."/>
            <person name="Huyghe A."/>
            <person name="Walter N."/>
            <person name="Hoogland C."/>
            <person name="Appel R.D."/>
            <person name="Sanchez J.-C."/>
            <person name="Zimmermann-Ivol C.G."/>
            <person name="Corthals G.L."/>
            <person name="Hochstrasser D.F."/>
            <person name="Schrenzel J."/>
        </authorList>
    </citation>
    <scope>IDENTIFICATION BY MASS SPECTROMETRY</scope>
    <source>
        <strain>N315</strain>
    </source>
</reference>
<reference key="3">
    <citation type="submission" date="2007-10" db="UniProtKB">
        <title>Shotgun proteomic analysis of total and membrane protein extracts of S. aureus strain N315.</title>
        <authorList>
            <person name="Vaezzadeh A.R."/>
            <person name="Deshusses J."/>
            <person name="Lescuyer P."/>
            <person name="Hochstrasser D.F."/>
        </authorList>
    </citation>
    <scope>IDENTIFICATION BY MASS SPECTROMETRY [LARGE SCALE ANALYSIS]</scope>
    <source>
        <strain>N315</strain>
    </source>
</reference>
<feature type="chain" id="PRO_0000083047" description="Methionyl-tRNA formyltransferase">
    <location>
        <begin position="1"/>
        <end position="311"/>
    </location>
</feature>
<feature type="binding site" evidence="1">
    <location>
        <begin position="109"/>
        <end position="112"/>
    </location>
    <ligand>
        <name>(6S)-5,6,7,8-tetrahydrofolate</name>
        <dbReference type="ChEBI" id="CHEBI:57453"/>
    </ligand>
</feature>
<keyword id="KW-0648">Protein biosynthesis</keyword>
<keyword id="KW-0808">Transferase</keyword>
<proteinExistence type="evidence at protein level"/>
<gene>
    <name evidence="1" type="primary">fmt</name>
    <name type="ordered locus">SA1059</name>
</gene>
<organism>
    <name type="scientific">Staphylococcus aureus (strain N315)</name>
    <dbReference type="NCBI Taxonomy" id="158879"/>
    <lineage>
        <taxon>Bacteria</taxon>
        <taxon>Bacillati</taxon>
        <taxon>Bacillota</taxon>
        <taxon>Bacilli</taxon>
        <taxon>Bacillales</taxon>
        <taxon>Staphylococcaceae</taxon>
        <taxon>Staphylococcus</taxon>
    </lineage>
</organism>
<name>FMT_STAAN</name>
<evidence type="ECO:0000255" key="1">
    <source>
        <dbReference type="HAMAP-Rule" id="MF_00182"/>
    </source>
</evidence>
<accession>P99127</accession>
<accession>Q99UQ2</accession>